<evidence type="ECO:0000255" key="1">
    <source>
        <dbReference type="HAMAP-Rule" id="MF_01315"/>
    </source>
</evidence>
<evidence type="ECO:0000256" key="2">
    <source>
        <dbReference type="SAM" id="MobiDB-lite"/>
    </source>
</evidence>
<evidence type="ECO:0000305" key="3"/>
<organism>
    <name type="scientific">Desulfotalea psychrophila (strain LSv54 / DSM 12343)</name>
    <dbReference type="NCBI Taxonomy" id="177439"/>
    <lineage>
        <taxon>Bacteria</taxon>
        <taxon>Pseudomonadati</taxon>
        <taxon>Thermodesulfobacteriota</taxon>
        <taxon>Desulfobulbia</taxon>
        <taxon>Desulfobulbales</taxon>
        <taxon>Desulfocapsaceae</taxon>
        <taxon>Desulfotalea</taxon>
    </lineage>
</organism>
<comment type="function">
    <text evidence="1">Located at the top of the head of the 30S subunit, it contacts several helices of the 16S rRNA. In the 70S ribosome it contacts the 23S rRNA (bridge B1a) and protein L5 of the 50S subunit (bridge B1b), connecting the 2 subunits; these bridges are implicated in subunit movement. Contacts the tRNAs in the A and P-sites.</text>
</comment>
<comment type="subunit">
    <text evidence="1">Part of the 30S ribosomal subunit. Forms a loose heterodimer with protein S19. Forms two bridges to the 50S subunit in the 70S ribosome.</text>
</comment>
<comment type="similarity">
    <text evidence="1">Belongs to the universal ribosomal protein uS13 family.</text>
</comment>
<gene>
    <name evidence="1" type="primary">rpsM</name>
    <name type="ordered locus">DP1149</name>
</gene>
<keyword id="KW-1185">Reference proteome</keyword>
<keyword id="KW-0687">Ribonucleoprotein</keyword>
<keyword id="KW-0689">Ribosomal protein</keyword>
<keyword id="KW-0694">RNA-binding</keyword>
<keyword id="KW-0699">rRNA-binding</keyword>
<keyword id="KW-0820">tRNA-binding</keyword>
<feature type="chain" id="PRO_0000230500" description="Small ribosomal subunit protein uS13">
    <location>
        <begin position="1"/>
        <end position="121"/>
    </location>
</feature>
<feature type="region of interest" description="Disordered" evidence="2">
    <location>
        <begin position="92"/>
        <end position="121"/>
    </location>
</feature>
<feature type="compositionally biased region" description="Basic residues" evidence="2">
    <location>
        <begin position="101"/>
        <end position="121"/>
    </location>
</feature>
<name>RS13_DESPS</name>
<proteinExistence type="inferred from homology"/>
<protein>
    <recommendedName>
        <fullName evidence="1">Small ribosomal subunit protein uS13</fullName>
    </recommendedName>
    <alternativeName>
        <fullName evidence="3">30S ribosomal protein S13</fullName>
    </alternativeName>
</protein>
<dbReference type="EMBL" id="CR522870">
    <property type="protein sequence ID" value="CAG35878.1"/>
    <property type="molecule type" value="Genomic_DNA"/>
</dbReference>
<dbReference type="RefSeq" id="WP_011188390.1">
    <property type="nucleotide sequence ID" value="NC_006138.1"/>
</dbReference>
<dbReference type="SMR" id="Q6AP46"/>
<dbReference type="STRING" id="177439.DP1149"/>
<dbReference type="KEGG" id="dps:DP1149"/>
<dbReference type="eggNOG" id="COG0099">
    <property type="taxonomic scope" value="Bacteria"/>
</dbReference>
<dbReference type="HOGENOM" id="CLU_103849_1_2_7"/>
<dbReference type="OrthoDB" id="9803610at2"/>
<dbReference type="Proteomes" id="UP000000602">
    <property type="component" value="Chromosome"/>
</dbReference>
<dbReference type="GO" id="GO:0005829">
    <property type="term" value="C:cytosol"/>
    <property type="evidence" value="ECO:0007669"/>
    <property type="project" value="TreeGrafter"/>
</dbReference>
<dbReference type="GO" id="GO:0015935">
    <property type="term" value="C:small ribosomal subunit"/>
    <property type="evidence" value="ECO:0007669"/>
    <property type="project" value="TreeGrafter"/>
</dbReference>
<dbReference type="GO" id="GO:0019843">
    <property type="term" value="F:rRNA binding"/>
    <property type="evidence" value="ECO:0007669"/>
    <property type="project" value="UniProtKB-UniRule"/>
</dbReference>
<dbReference type="GO" id="GO:0003735">
    <property type="term" value="F:structural constituent of ribosome"/>
    <property type="evidence" value="ECO:0007669"/>
    <property type="project" value="InterPro"/>
</dbReference>
<dbReference type="GO" id="GO:0000049">
    <property type="term" value="F:tRNA binding"/>
    <property type="evidence" value="ECO:0007669"/>
    <property type="project" value="UniProtKB-UniRule"/>
</dbReference>
<dbReference type="GO" id="GO:0006412">
    <property type="term" value="P:translation"/>
    <property type="evidence" value="ECO:0007669"/>
    <property type="project" value="UniProtKB-UniRule"/>
</dbReference>
<dbReference type="FunFam" id="1.10.8.50:FF:000001">
    <property type="entry name" value="30S ribosomal protein S13"/>
    <property type="match status" value="1"/>
</dbReference>
<dbReference type="FunFam" id="4.10.910.10:FF:000001">
    <property type="entry name" value="30S ribosomal protein S13"/>
    <property type="match status" value="1"/>
</dbReference>
<dbReference type="Gene3D" id="1.10.8.50">
    <property type="match status" value="1"/>
</dbReference>
<dbReference type="Gene3D" id="4.10.910.10">
    <property type="entry name" value="30s ribosomal protein s13, domain 2"/>
    <property type="match status" value="1"/>
</dbReference>
<dbReference type="HAMAP" id="MF_01315">
    <property type="entry name" value="Ribosomal_uS13"/>
    <property type="match status" value="1"/>
</dbReference>
<dbReference type="InterPro" id="IPR027437">
    <property type="entry name" value="Rbsml_uS13_C"/>
</dbReference>
<dbReference type="InterPro" id="IPR001892">
    <property type="entry name" value="Ribosomal_uS13"/>
</dbReference>
<dbReference type="InterPro" id="IPR010979">
    <property type="entry name" value="Ribosomal_uS13-like_H2TH"/>
</dbReference>
<dbReference type="InterPro" id="IPR019980">
    <property type="entry name" value="Ribosomal_uS13_bac-type"/>
</dbReference>
<dbReference type="InterPro" id="IPR018269">
    <property type="entry name" value="Ribosomal_uS13_CS"/>
</dbReference>
<dbReference type="NCBIfam" id="TIGR03631">
    <property type="entry name" value="uS13_bact"/>
    <property type="match status" value="1"/>
</dbReference>
<dbReference type="PANTHER" id="PTHR10871">
    <property type="entry name" value="30S RIBOSOMAL PROTEIN S13/40S RIBOSOMAL PROTEIN S18"/>
    <property type="match status" value="1"/>
</dbReference>
<dbReference type="PANTHER" id="PTHR10871:SF1">
    <property type="entry name" value="SMALL RIBOSOMAL SUBUNIT PROTEIN US13M"/>
    <property type="match status" value="1"/>
</dbReference>
<dbReference type="Pfam" id="PF00416">
    <property type="entry name" value="Ribosomal_S13"/>
    <property type="match status" value="1"/>
</dbReference>
<dbReference type="PIRSF" id="PIRSF002134">
    <property type="entry name" value="Ribosomal_S13"/>
    <property type="match status" value="1"/>
</dbReference>
<dbReference type="SUPFAM" id="SSF46946">
    <property type="entry name" value="S13-like H2TH domain"/>
    <property type="match status" value="1"/>
</dbReference>
<dbReference type="PROSITE" id="PS00646">
    <property type="entry name" value="RIBOSOMAL_S13_1"/>
    <property type="match status" value="1"/>
</dbReference>
<dbReference type="PROSITE" id="PS50159">
    <property type="entry name" value="RIBOSOMAL_S13_2"/>
    <property type="match status" value="1"/>
</dbReference>
<sequence length="121" mass="13831">MARIAGIDLPKNKHIDRALTYIHGIGLTSARKILDAVELPYTMNSDDLDGETVNRIRKVIEADYTVEGDRRREVSMDIKRLTDLGCYRGRRHRMGLPCRGQKTKTNARTRKGPRRGAARRK</sequence>
<accession>Q6AP46</accession>
<reference key="1">
    <citation type="journal article" date="2004" name="Environ. Microbiol.">
        <title>The genome of Desulfotalea psychrophila, a sulfate-reducing bacterium from permanently cold Arctic sediments.</title>
        <authorList>
            <person name="Rabus R."/>
            <person name="Ruepp A."/>
            <person name="Frickey T."/>
            <person name="Rattei T."/>
            <person name="Fartmann B."/>
            <person name="Stark M."/>
            <person name="Bauer M."/>
            <person name="Zibat A."/>
            <person name="Lombardot T."/>
            <person name="Becker I."/>
            <person name="Amann J."/>
            <person name="Gellner K."/>
            <person name="Teeling H."/>
            <person name="Leuschner W.D."/>
            <person name="Gloeckner F.-O."/>
            <person name="Lupas A.N."/>
            <person name="Amann R."/>
            <person name="Klenk H.-P."/>
        </authorList>
    </citation>
    <scope>NUCLEOTIDE SEQUENCE [LARGE SCALE GENOMIC DNA]</scope>
    <source>
        <strain>DSM 12343 / LSv54</strain>
    </source>
</reference>